<feature type="transit peptide" description="Mitochondrion" evidence="10">
    <location>
        <begin position="1"/>
        <end position="43"/>
    </location>
</feature>
<feature type="chain" id="PRO_0000002423" description="ATP synthase F(1) complex subunit alpha, mitochondrial">
    <location>
        <begin position="44"/>
        <end position="553"/>
    </location>
</feature>
<feature type="binding site" evidence="7 11 12 14 16 17 18 19 20 21 22 23 24 25 26 27 28 29 30 31 32 33 34 35 36">
    <location>
        <position position="215"/>
    </location>
    <ligand>
        <name>ATP</name>
        <dbReference type="ChEBI" id="CHEBI:30616"/>
        <note>ligand shared between homotrimeric partners</note>
    </ligand>
</feature>
<feature type="binding site" evidence="7 11 12 14 16 17 18 19 20 21 22 23 24 25 26 27 28 29 30 31 32 33 34 35 36">
    <location>
        <position position="217"/>
    </location>
    <ligand>
        <name>ATP</name>
        <dbReference type="ChEBI" id="CHEBI:30616"/>
        <note>ligand shared between homotrimeric partners</note>
    </ligand>
</feature>
<feature type="binding site" evidence="7 11 12 14 16 17 18 19 20 21 22 23 24 25 26 27 28 29 30 31 32 33 34 35 36">
    <location>
        <position position="218"/>
    </location>
    <ligand>
        <name>ATP</name>
        <dbReference type="ChEBI" id="CHEBI:30616"/>
        <note>ligand shared between homotrimeric partners</note>
    </ligand>
</feature>
<feature type="binding site" evidence="7 11 12 14 16 17 18 19 20 21 22 23 24 25 26 27 28 29 30 31 32 33 34 35 36">
    <location>
        <position position="219"/>
    </location>
    <ligand>
        <name>ATP</name>
        <dbReference type="ChEBI" id="CHEBI:30616"/>
        <note>ligand shared between homotrimeric partners</note>
    </ligand>
</feature>
<feature type="binding site" evidence="7 11 12 14 16 17 18 19 20 21 22 23 24 25 26 27 28 29 30 31 32 33 34 35 36">
    <location>
        <position position="219"/>
    </location>
    <ligand>
        <name>Mg(2+)</name>
        <dbReference type="ChEBI" id="CHEBI:18420"/>
        <note>ligand shared between homotrimeric partners</note>
    </ligand>
</feature>
<feature type="binding site" evidence="7 11 12 14 16 17 18 19 20 21 22 23 24 25 26 27 28 29 30 31 32 33 34 35 36">
    <location>
        <position position="220"/>
    </location>
    <ligand>
        <name>ATP</name>
        <dbReference type="ChEBI" id="CHEBI:30616"/>
        <note>ligand shared between homotrimeric partners</note>
    </ligand>
</feature>
<feature type="binding site" evidence="7 11 12 14 16 17 18 19 20 21 22 23 24 25 26 27 28 29 30 31 32 33 34 35 36">
    <location>
        <position position="312"/>
    </location>
    <ligand>
        <name>Mg(2+)</name>
        <dbReference type="ChEBI" id="CHEBI:18420"/>
        <note>ligand shared between homotrimeric partners</note>
    </ligand>
</feature>
<feature type="binding site" evidence="7 11 12 14 16 17 18 19 20 21 22 23 24 25 26 27 28 29 30 31 32 33 34 35 36">
    <location>
        <position position="473"/>
    </location>
    <ligand>
        <name>ATP</name>
        <dbReference type="ChEBI" id="CHEBI:30616"/>
        <note>ligand shared between homotrimeric partners</note>
    </ligand>
</feature>
<feature type="binding site" evidence="7 11 12 14 16 17 18 19 20 21 22 23 24 25 26 27 28 29 30 31 32 33 34 35 36">
    <location>
        <position position="475"/>
    </location>
    <ligand>
        <name>ATP</name>
        <dbReference type="ChEBI" id="CHEBI:30616"/>
        <note>ligand shared between homotrimeric partners</note>
    </ligand>
</feature>
<feature type="site" description="Required for activity" evidence="1">
    <location>
        <position position="413"/>
    </location>
</feature>
<feature type="modified residue" description="Pyrrolidone carboxylic acid" evidence="10">
    <location>
        <position position="44"/>
    </location>
</feature>
<feature type="modified residue" description="Phosphoserine" evidence="3">
    <location>
        <position position="53"/>
    </location>
</feature>
<feature type="modified residue" description="Phosphoserine" evidence="3">
    <location>
        <position position="65"/>
    </location>
</feature>
<feature type="modified residue" description="Phosphoserine; alternate" evidence="3">
    <location>
        <position position="76"/>
    </location>
</feature>
<feature type="modified residue" description="Phosphoserine" evidence="4">
    <location>
        <position position="106"/>
    </location>
</feature>
<feature type="modified residue" description="N6-acetyllysine" evidence="4">
    <location>
        <position position="123"/>
    </location>
</feature>
<feature type="modified residue" description="N6-acetyllysine" evidence="4">
    <location>
        <position position="126"/>
    </location>
</feature>
<feature type="modified residue" description="N6-acetyllysine" evidence="4">
    <location>
        <position position="132"/>
    </location>
</feature>
<feature type="modified residue" description="Phosphothreonine" evidence="2">
    <location>
        <position position="134"/>
    </location>
</feature>
<feature type="modified residue" description="N6-acetyllysine; alternate" evidence="3">
    <location>
        <position position="161"/>
    </location>
</feature>
<feature type="modified residue" description="N6-succinyllysine; alternate" evidence="4">
    <location>
        <position position="161"/>
    </location>
</feature>
<feature type="modified residue" description="Phosphoserine" evidence="3">
    <location>
        <position position="166"/>
    </location>
</feature>
<feature type="modified residue" description="N6-acetyllysine; alternate" evidence="4">
    <location>
        <position position="167"/>
    </location>
</feature>
<feature type="modified residue" description="N6-succinyllysine; alternate" evidence="4">
    <location>
        <position position="167"/>
    </location>
</feature>
<feature type="modified residue" description="Phosphoserine" evidence="3">
    <location>
        <position position="184"/>
    </location>
</feature>
<feature type="modified residue" description="Omega-N-methylarginine" evidence="4">
    <location>
        <position position="204"/>
    </location>
</feature>
<feature type="modified residue" description="N6-acetyllysine; alternate" evidence="4">
    <location>
        <position position="230"/>
    </location>
</feature>
<feature type="modified residue" description="N6-succinyllysine; alternate" evidence="4">
    <location>
        <position position="230"/>
    </location>
</feature>
<feature type="modified residue" description="N6-acetyllysine; alternate" evidence="4">
    <location>
        <position position="239"/>
    </location>
</feature>
<feature type="modified residue" description="N6-succinyllysine; alternate" evidence="4">
    <location>
        <position position="239"/>
    </location>
</feature>
<feature type="modified residue" description="N6-acetyllysine" evidence="4">
    <location>
        <position position="240"/>
    </location>
</feature>
<feature type="modified residue" description="N6-acetyllysine; alternate" evidence="3">
    <location>
        <position position="261"/>
    </location>
</feature>
<feature type="modified residue" description="N6-succinyllysine; alternate" evidence="4">
    <location>
        <position position="261"/>
    </location>
</feature>
<feature type="modified residue" description="N6-acetyllysine; alternate" evidence="4">
    <location>
        <position position="305"/>
    </location>
</feature>
<feature type="modified residue" description="N6-succinyllysine; alternate" evidence="4">
    <location>
        <position position="305"/>
    </location>
</feature>
<feature type="modified residue" description="N6-acetyllysine; alternate" evidence="4">
    <location>
        <position position="427"/>
    </location>
</feature>
<feature type="modified residue" description="N6-succinyllysine; alternate" evidence="4">
    <location>
        <position position="427"/>
    </location>
</feature>
<feature type="modified residue" description="N6-acetyllysine" evidence="3">
    <location>
        <position position="434"/>
    </location>
</feature>
<feature type="modified residue" description="N6-acetyllysine; alternate" evidence="3">
    <location>
        <position position="498"/>
    </location>
</feature>
<feature type="modified residue" description="N6-succinyllysine; alternate" evidence="4">
    <location>
        <position position="498"/>
    </location>
</feature>
<feature type="modified residue" description="N6-acetyllysine; alternate" evidence="3">
    <location>
        <position position="506"/>
    </location>
</feature>
<feature type="modified residue" description="N6-succinyllysine; alternate" evidence="4">
    <location>
        <position position="506"/>
    </location>
</feature>
<feature type="modified residue" description="N6-acetyllysine; alternate" evidence="4">
    <location>
        <position position="531"/>
    </location>
</feature>
<feature type="modified residue" description="N6-succinyllysine; alternate" evidence="4">
    <location>
        <position position="531"/>
    </location>
</feature>
<feature type="modified residue" description="N6-acetyllysine; alternate" evidence="3">
    <location>
        <position position="539"/>
    </location>
</feature>
<feature type="modified residue" description="N6-succinyllysine; alternate" evidence="4">
    <location>
        <position position="539"/>
    </location>
</feature>
<feature type="modified residue" description="N6-acetyllysine" evidence="4">
    <location>
        <position position="541"/>
    </location>
</feature>
<feature type="glycosylation site" description="O-linked (GlcNAc) serine; alternate" evidence="1">
    <location>
        <position position="76"/>
    </location>
</feature>
<feature type="sequence conflict" description="In Ref. 3; AAI16060." evidence="15" ref="3">
    <original>V</original>
    <variation>M</variation>
    <location>
        <position position="4"/>
    </location>
</feature>
<feature type="sequence conflict" description="In Ref. 4; AAA30399." evidence="15" ref="4">
    <original>V</original>
    <variation>I</variation>
    <location>
        <position position="6"/>
    </location>
</feature>
<feature type="sequence conflict" description="In Ref. 4; AAA30399." evidence="15" ref="4">
    <original>IAA</original>
    <variation>VGT</variation>
    <location>
        <begin position="31"/>
        <end position="33"/>
    </location>
</feature>
<feature type="sequence conflict" description="In Ref. 4; AAA30399." evidence="15" ref="4">
    <original>S</original>
    <variation>T</variation>
    <location>
        <position position="41"/>
    </location>
</feature>
<feature type="sequence conflict" description="In Ref. 4; AAA30399." evidence="15" ref="4">
    <original>V</original>
    <variation>M</variation>
    <location>
        <position position="51"/>
    </location>
</feature>
<feature type="sequence conflict" description="In Ref. 4; AAA30399." evidence="15" ref="4">
    <original>E</original>
    <variation>D</variation>
    <location>
        <position position="144"/>
    </location>
</feature>
<feature type="sequence conflict" description="In Ref. 4; AAA30399." evidence="15" ref="4">
    <original>I</original>
    <variation>V</variation>
    <location>
        <position position="164"/>
    </location>
</feature>
<feature type="sequence conflict" description="In Ref. 4; AAA30399." evidence="15" ref="4">
    <original>A</original>
    <variation>I</variation>
    <location>
        <position position="168"/>
    </location>
</feature>
<feature type="sequence conflict" description="In Ref. 4; AAA30399." evidence="15" ref="4">
    <original>A</original>
    <variation>S</variation>
    <location>
        <position position="358"/>
    </location>
</feature>
<feature type="sequence conflict" description="In Ref. 3; AAI16060 and 5; AA sequence." evidence="15" ref="3 5">
    <original>S</original>
    <variation>G</variation>
    <location>
        <position position="524"/>
    </location>
</feature>
<feature type="helix" evidence="38">
    <location>
        <begin position="52"/>
        <end position="59"/>
    </location>
</feature>
<feature type="strand" evidence="38">
    <location>
        <begin position="63"/>
        <end position="66"/>
    </location>
</feature>
<feature type="turn" evidence="37">
    <location>
        <begin position="68"/>
        <end position="70"/>
    </location>
</feature>
<feature type="strand" evidence="37">
    <location>
        <begin position="72"/>
        <end position="78"/>
    </location>
</feature>
<feature type="strand" evidence="37">
    <location>
        <begin position="81"/>
        <end position="86"/>
    </location>
</feature>
<feature type="strand" evidence="37">
    <location>
        <begin position="95"/>
        <end position="98"/>
    </location>
</feature>
<feature type="strand" evidence="37">
    <location>
        <begin position="103"/>
        <end position="110"/>
    </location>
</feature>
<feature type="strand" evidence="37">
    <location>
        <begin position="113"/>
        <end position="120"/>
    </location>
</feature>
<feature type="helix" evidence="37">
    <location>
        <begin position="122"/>
        <end position="124"/>
    </location>
</feature>
<feature type="strand" evidence="37">
    <location>
        <begin position="130"/>
        <end position="133"/>
    </location>
</feature>
<feature type="strand" evidence="37">
    <location>
        <begin position="139"/>
        <end position="143"/>
    </location>
</feature>
<feature type="helix" evidence="37">
    <location>
        <begin position="144"/>
        <end position="146"/>
    </location>
</feature>
<feature type="strand" evidence="38">
    <location>
        <begin position="150"/>
        <end position="152"/>
    </location>
</feature>
<feature type="strand" evidence="37">
    <location>
        <begin position="159"/>
        <end position="161"/>
    </location>
</feature>
<feature type="strand" evidence="37">
    <location>
        <begin position="168"/>
        <end position="173"/>
    </location>
</feature>
<feature type="strand" evidence="37">
    <location>
        <begin position="179"/>
        <end position="182"/>
    </location>
</feature>
<feature type="strand" evidence="37">
    <location>
        <begin position="187"/>
        <end position="189"/>
    </location>
</feature>
<feature type="helix" evidence="37">
    <location>
        <begin position="194"/>
        <end position="199"/>
    </location>
</feature>
<feature type="strand" evidence="37">
    <location>
        <begin position="207"/>
        <end position="213"/>
    </location>
</feature>
<feature type="strand" evidence="38">
    <location>
        <begin position="214"/>
        <end position="217"/>
    </location>
</feature>
<feature type="helix" evidence="37">
    <location>
        <begin position="218"/>
        <end position="228"/>
    </location>
</feature>
<feature type="helix" evidence="37">
    <location>
        <begin position="230"/>
        <end position="233"/>
    </location>
</feature>
<feature type="strand" evidence="37">
    <location>
        <begin position="234"/>
        <end position="236"/>
    </location>
</feature>
<feature type="helix" evidence="37">
    <location>
        <begin position="238"/>
        <end position="240"/>
    </location>
</feature>
<feature type="strand" evidence="37">
    <location>
        <begin position="243"/>
        <end position="250"/>
    </location>
</feature>
<feature type="helix" evidence="37">
    <location>
        <begin position="253"/>
        <end position="265"/>
    </location>
</feature>
<feature type="helix" evidence="37">
    <location>
        <begin position="269"/>
        <end position="271"/>
    </location>
</feature>
<feature type="strand" evidence="37">
    <location>
        <begin position="272"/>
        <end position="277"/>
    </location>
</feature>
<feature type="helix" evidence="37">
    <location>
        <begin position="283"/>
        <end position="302"/>
    </location>
</feature>
<feature type="strand" evidence="37">
    <location>
        <begin position="306"/>
        <end position="312"/>
    </location>
</feature>
<feature type="helix" evidence="37">
    <location>
        <begin position="314"/>
        <end position="327"/>
    </location>
</feature>
<feature type="helix" evidence="37">
    <location>
        <begin position="334"/>
        <end position="336"/>
    </location>
</feature>
<feature type="helix" evidence="37">
    <location>
        <begin position="341"/>
        <end position="349"/>
    </location>
</feature>
<feature type="helix" evidence="37">
    <location>
        <begin position="357"/>
        <end position="359"/>
    </location>
</feature>
<feature type="strand" evidence="37">
    <location>
        <begin position="363"/>
        <end position="371"/>
    </location>
</feature>
<feature type="strand" evidence="38">
    <location>
        <begin position="373"/>
        <end position="375"/>
    </location>
</feature>
<feature type="helix" evidence="37">
    <location>
        <begin position="380"/>
        <end position="388"/>
    </location>
</feature>
<feature type="strand" evidence="37">
    <location>
        <begin position="389"/>
        <end position="395"/>
    </location>
</feature>
<feature type="helix" evidence="37">
    <location>
        <begin position="397"/>
        <end position="402"/>
    </location>
</feature>
<feature type="turn" evidence="37">
    <location>
        <begin position="410"/>
        <end position="412"/>
    </location>
</feature>
<feature type="strand" evidence="37">
    <location>
        <begin position="414"/>
        <end position="417"/>
    </location>
</feature>
<feature type="helix" evidence="37">
    <location>
        <begin position="418"/>
        <end position="421"/>
    </location>
</feature>
<feature type="helix" evidence="37">
    <location>
        <begin position="424"/>
        <end position="443"/>
    </location>
</feature>
<feature type="helix" evidence="37">
    <location>
        <begin position="444"/>
        <end position="446"/>
    </location>
</feature>
<feature type="strand" evidence="38">
    <location>
        <begin position="451"/>
        <end position="453"/>
    </location>
</feature>
<feature type="helix" evidence="37">
    <location>
        <begin position="455"/>
        <end position="471"/>
    </location>
</feature>
<feature type="helix" evidence="37">
    <location>
        <begin position="481"/>
        <end position="492"/>
    </location>
</feature>
<feature type="turn" evidence="37">
    <location>
        <begin position="493"/>
        <end position="496"/>
    </location>
</feature>
<feature type="strand" evidence="37">
    <location>
        <begin position="497"/>
        <end position="499"/>
    </location>
</feature>
<feature type="helix" evidence="37">
    <location>
        <begin position="501"/>
        <end position="503"/>
    </location>
</feature>
<feature type="helix" evidence="37">
    <location>
        <begin position="504"/>
        <end position="517"/>
    </location>
</feature>
<feature type="helix" evidence="37">
    <location>
        <begin position="520"/>
        <end position="528"/>
    </location>
</feature>
<feature type="helix" evidence="37">
    <location>
        <begin position="534"/>
        <end position="551"/>
    </location>
</feature>
<evidence type="ECO:0000250" key="1"/>
<evidence type="ECO:0000250" key="2">
    <source>
        <dbReference type="UniProtKB" id="P15999"/>
    </source>
</evidence>
<evidence type="ECO:0000250" key="3">
    <source>
        <dbReference type="UniProtKB" id="P25705"/>
    </source>
</evidence>
<evidence type="ECO:0000250" key="4">
    <source>
        <dbReference type="UniProtKB" id="Q03265"/>
    </source>
</evidence>
<evidence type="ECO:0000269" key="5">
    <source>
    </source>
</evidence>
<evidence type="ECO:0000269" key="6">
    <source>
    </source>
</evidence>
<evidence type="ECO:0000269" key="7">
    <source>
    </source>
</evidence>
<evidence type="ECO:0000269" key="8">
    <source>
    </source>
</evidence>
<evidence type="ECO:0000269" key="9">
    <source>
    </source>
</evidence>
<evidence type="ECO:0000269" key="10">
    <source>
    </source>
</evidence>
<evidence type="ECO:0000269" key="11">
    <source>
    </source>
</evidence>
<evidence type="ECO:0000269" key="12">
    <source>
    </source>
</evidence>
<evidence type="ECO:0000269" key="13">
    <source>
    </source>
</evidence>
<evidence type="ECO:0000269" key="14">
    <source>
    </source>
</evidence>
<evidence type="ECO:0000305" key="15"/>
<evidence type="ECO:0007744" key="16">
    <source>
        <dbReference type="PDB" id="1BMF"/>
    </source>
</evidence>
<evidence type="ECO:0007744" key="17">
    <source>
        <dbReference type="PDB" id="1COW"/>
    </source>
</evidence>
<evidence type="ECO:0007744" key="18">
    <source>
        <dbReference type="PDB" id="1E1Q"/>
    </source>
</evidence>
<evidence type="ECO:0007744" key="19">
    <source>
        <dbReference type="PDB" id="1E1R"/>
    </source>
</evidence>
<evidence type="ECO:0007744" key="20">
    <source>
        <dbReference type="PDB" id="1E79"/>
    </source>
</evidence>
<evidence type="ECO:0007744" key="21">
    <source>
        <dbReference type="PDB" id="1EFR"/>
    </source>
</evidence>
<evidence type="ECO:0007744" key="22">
    <source>
        <dbReference type="PDB" id="1H8H"/>
    </source>
</evidence>
<evidence type="ECO:0007744" key="23">
    <source>
        <dbReference type="PDB" id="1NBM"/>
    </source>
</evidence>
<evidence type="ECO:0007744" key="24">
    <source>
        <dbReference type="PDB" id="1OHH"/>
    </source>
</evidence>
<evidence type="ECO:0007744" key="25">
    <source>
        <dbReference type="PDB" id="2CK3"/>
    </source>
</evidence>
<evidence type="ECO:0007744" key="26">
    <source>
        <dbReference type="PDB" id="2JDI"/>
    </source>
</evidence>
<evidence type="ECO:0007744" key="27">
    <source>
        <dbReference type="PDB" id="2JIZ"/>
    </source>
</evidence>
<evidence type="ECO:0007744" key="28">
    <source>
        <dbReference type="PDB" id="2JJ1"/>
    </source>
</evidence>
<evidence type="ECO:0007744" key="29">
    <source>
        <dbReference type="PDB" id="2JJ2"/>
    </source>
</evidence>
<evidence type="ECO:0007744" key="30">
    <source>
        <dbReference type="PDB" id="2V7Q"/>
    </source>
</evidence>
<evidence type="ECO:0007744" key="31">
    <source>
        <dbReference type="PDB" id="2WSS"/>
    </source>
</evidence>
<evidence type="ECO:0007744" key="32">
    <source>
        <dbReference type="PDB" id="2XND"/>
    </source>
</evidence>
<evidence type="ECO:0007744" key="33">
    <source>
        <dbReference type="PDB" id="4TSF"/>
    </source>
</evidence>
<evidence type="ECO:0007744" key="34">
    <source>
        <dbReference type="PDB" id="4TT3"/>
    </source>
</evidence>
<evidence type="ECO:0007744" key="35">
    <source>
        <dbReference type="PDB" id="4YXW"/>
    </source>
</evidence>
<evidence type="ECO:0007744" key="36">
    <source>
        <dbReference type="PDB" id="4Z1M"/>
    </source>
</evidence>
<evidence type="ECO:0007829" key="37">
    <source>
        <dbReference type="PDB" id="1W0K"/>
    </source>
</evidence>
<evidence type="ECO:0007829" key="38">
    <source>
        <dbReference type="PDB" id="6YY0"/>
    </source>
</evidence>
<proteinExistence type="evidence at protein level"/>
<sequence length="553" mass="59720">MLSVRVAAAVARALPRRAGLVSKNALGSSFIAARNLHASNSRLQKTGTAEVSSILEERILGADTSVDLEETGRVLSIGDGIARVHGLRNVQAEEMVEFSSGLKGMSLNLEPDNVGVVVFGNDKLIKEGDIVKRTGAIVDVPVGEELLGRVVDALGNAIDGKGPIGSKARRRVGLKAPGIIPRISVREPMQTGIKAVDSLVPIGRGQRELIIGDRQTGKTSIAIDTIINQKRFNDGTDEKKKLYCIYVAIGQKRSTVAQLVKRLTDADAMKYTIVVSATASDAAPLQYLAPYSGCSMGEYFRDNGKHALIIYDDLSKQAVAYRQMSLLLRRPPGREAYPGDVFYLHSRLLERAAKMNDAFGGGSLTALPVIETQAGDVSAYIPTNVISITDGQIFLETELFYKGIRPAINVGLSVSRVGSAAQTRAMKQVAGTMKLELAQYREVAAFAQFGSDLDAATQQLLSRGVRLTELLKQGQYSPMAIEEQVAVIYAGVRGYLDKLEPSKITKFENAFLSHVISQHQALLSKIRTDGKISEESDAKLKEIVTNFLAGFEA</sequence>
<comment type="function">
    <text evidence="3 8">Subunit alpha, of the mitochondrial membrane ATP synthase complex (F(1)F(0) ATP synthase or Complex V) that produces ATP from ADP in the presence of a proton gradient across the membrane which is generated by electron transport complexes of the respiratory chain. ATP synthase complex consist of a soluble F(1) head domain - the catalytic core - and a membrane F(1) domain - the membrane proton channel. These two domains are linked by a central stalk rotating inside the F(1) region and a stationary peripheral stalk. During catalysis, ATP synthesis in the catalytic domain of F(1) is coupled via a rotary mechanism of the central stalk subunits to proton translocation (By similarity). In vivo, can only synthesize ATP although its ATP hydrolase activity can be activated artificially in vitro (PubMed:23407638). With the catalytic subunit beta (ATP5F1B), forms the catalytic core in the F(1) domain. Subunit alpha does not bear the catalytic high-affinity ATP-binding sites (By similarity).</text>
</comment>
<comment type="subunit">
    <text evidence="2 3 4 6 8 9 10">Homotrimer (By similarity). Component of the ATP synthase complex composed at least of ATP5F1A/subunit alpha, ATP5F1B/subunit beta, ATP5MC1/subunit c (homooctomer), MT-ATP6/subunit a, MT-ATP8/subunit 8, ATP5ME/subunit e, ATP5MF/subunit f, ATP5MG/subunit g, ATP5MK/subunit k, ATP5MJ/subunit j, ATP5F1C/subunit gamma, ATP5F1D/subunit delta, ATP5F1E/subunit epsilon, ATP5PF/subunit F6, ATP5PB/subunit b, ATP5PD/subunit d, ATP5PO/subunit OSCP (PubMed:17570365, PubMed:23407638, PubMed:25851905, PubMed:2864455). ATP synthase complex consists of a soluble F(1) head domain (subunits alpha(3) and beta(3)) - the catalytic core - and a membrane F(0) domain - the membrane proton channel (subunits c, a, 8, e, f, g, k and j) (PubMed:17570365, PubMed:23407638, PubMed:2864455). These two domains are linked by a central stalk (subunits gamma, delta, and epsilon) rotating inside the F1 region and a stationary peripheral stalk (subunits F6, b, d, and OSCP) (PubMed:17570365, PubMed:23407638, PubMed:2864455). Interacts with ATPAF2. Interacts with HRG; the interaction occurs on the surface of T-cells and alters the cell morphology when associated with concanavalin (in vitro). Interacts with PLG (angiostatin peptide); the interaction inhibits most of the angiogenic properties of angiostatin. Interacts with BLOC1S1 (By similarity). Interacts with BCL2L1 isoform BCL-X(L); the interaction mediates the association of BCL2L1 isoform BCL-X(L) with the mitochondrial membrane F(1)F(0) ATP synthase and enhances neurons metabolic efficiency (By similarity). Interacts with CLN5 and PPT1. Interacts with S100A1; this interaction increases F1-ATPase activity (By similarity). Interacts with ABCB7; this interaction allows the regulation of cellular iron homeostasis and cellular reactive oxygen species (ROS) levels in cardiomyocytes (By similarity).</text>
</comment>
<comment type="subcellular location">
    <subcellularLocation>
        <location evidence="5 8 10 13">Mitochondrion inner membrane</location>
        <topology evidence="5 8 10 13">Peripheral membrane protein</topology>
        <orientation evidence="5 13">Matrix side</orientation>
    </subcellularLocation>
    <subcellularLocation>
        <location evidence="3">Cell membrane</location>
        <topology evidence="3">Peripheral membrane protein</topology>
        <orientation evidence="3">Extracellular side</orientation>
    </subcellularLocation>
    <text evidence="3">Colocalizes with HRG on the cell surface of T-cells.</text>
</comment>
<comment type="tissue specificity">
    <text evidence="10">Heart muscle (at protein level) (PubMed:2864455). Heart and liver.</text>
</comment>
<comment type="PTM">
    <text evidence="3">Acetylated on lysine residues. BLOC1S1 is required for acetylation.</text>
</comment>
<comment type="miscellaneous">
    <text evidence="3">The siderophore enterobactin (Ent) produced by enteric bacteria binds Fe(3+) and helps bacteria scavenge iron ions from the environment. As a consequence, the mammalian siderocalin LCN2 plays an important role in defense against bacterial infections by sequestering iron bound to microbial siderophores. LCN2 can also bind iron bound to endogenous or nutrient-derived iron chelators and plays an important role in cellular iron homeostasis. Enterobactin produced by non-pathogenic E.coli strains can facilitate mitochondrial iron assimilation, suggesting that iron bound to siderophores from non-pathogenic bacteria may contribute to iron absorption by the host.</text>
</comment>
<comment type="similarity">
    <text evidence="15">Belongs to the ATPase alpha/beta chains family.</text>
</comment>
<gene>
    <name evidence="3" type="primary">ATP5F1A</name>
    <name type="synonym">ATP5A1</name>
    <name type="synonym">ATP5A2</name>
</gene>
<name>ATPA_BOVIN</name>
<reference key="1">
    <citation type="journal article" date="1989" name="Biochemistry">
        <title>ATP synthase from bovine mitochondria: complementary DNA sequence of the import precursor of a heart isoform of the alpha subunit.</title>
        <authorList>
            <person name="Walker J.E."/>
            <person name="Powell S.J."/>
            <person name="Vinas O."/>
            <person name="Runswick M.J."/>
        </authorList>
    </citation>
    <scope>NUCLEOTIDE SEQUENCE [MRNA]</scope>
    <source>
        <tissue>Heart</tissue>
    </source>
</reference>
<reference key="2">
    <citation type="journal article" date="1992" name="Biochim. Biophys. Acta">
        <title>Structural organization of a nuclear gene for the alpha-subunit of the bovine mitochondrial ATP synthase complex.</title>
        <authorList>
            <person name="Pierce D.J."/>
            <person name="Jordan E.M."/>
            <person name="Breen G.A.M."/>
        </authorList>
    </citation>
    <scope>NUCLEOTIDE SEQUENCE [GENOMIC DNA]</scope>
</reference>
<reference key="3">
    <citation type="submission" date="2006-05" db="EMBL/GenBank/DDBJ databases">
        <authorList>
            <consortium name="NIH - Mammalian Gene Collection (MGC) project"/>
        </authorList>
    </citation>
    <scope>NUCLEOTIDE SEQUENCE [LARGE SCALE MRNA]</scope>
    <source>
        <strain>Hereford</strain>
        <tissue>Ascending colon</tissue>
    </source>
</reference>
<reference key="4">
    <citation type="journal article" date="1988" name="Biochem. Biophys. Res. Commun.">
        <title>Bovine liver cDNA clones encoding a precursor of the alpha-subunit of the mitochondrial ATP synthase complex.</title>
        <authorList>
            <person name="Breen G.A.M."/>
        </authorList>
    </citation>
    <scope>NUCLEOTIDE SEQUENCE [MRNA] OF 1-359</scope>
    <source>
        <tissue>Liver</tissue>
    </source>
</reference>
<reference key="5">
    <citation type="journal article" date="1985" name="J. Mol. Biol.">
        <title>Primary structure and subunit stoichiometry of F1-ATPase from bovine mitochondria.</title>
        <authorList>
            <person name="Walker J.E."/>
            <person name="Fearnley I.M."/>
            <person name="Gay N.J."/>
            <person name="Gibson B.W."/>
            <person name="Northrop F.D."/>
            <person name="Powell S.J."/>
            <person name="Runswick M.J."/>
            <person name="Saraste M."/>
            <person name="Tybulewicz V.L.J."/>
        </authorList>
    </citation>
    <scope>PROTEIN SEQUENCE OF 44-552</scope>
    <scope>PYROGLUTAMATE FORMATION AT GLN-44</scope>
    <scope>SUBCELLULAR LOCATION</scope>
    <scope>SUBUNIT</scope>
    <scope>TISSUE SPECIFICITY</scope>
    <source>
        <tissue>Heart</tissue>
    </source>
</reference>
<reference key="6">
    <citation type="journal article" date="1979" name="Cell Biophys.">
        <title>Visualization of mitochondrial coupling factor F1(ATPase) by freeze-drying.</title>
        <authorList>
            <person name="Sikerwar S.S."/>
            <person name="Malhotra S.K."/>
        </authorList>
    </citation>
    <scope>SUBCELLULAR LOCATION</scope>
    <scope>TOPOLOGY</scope>
</reference>
<reference key="7">
    <citation type="journal article" date="2003" name="EMBO J.">
        <title>Structure of the mitochondrial ATP synthase by electron cryomicroscopy.</title>
        <authorList>
            <person name="Rubinstein J.L."/>
            <person name="Walker J.E."/>
            <person name="Henderson R."/>
        </authorList>
    </citation>
    <scope>SUBCELLULAR LOCATION</scope>
    <scope>TOPOLOGY</scope>
</reference>
<reference key="8">
    <citation type="journal article" date="2007" name="FEBS Lett.">
        <title>Association of two proteolipids of unknown function with ATP synthase from bovine heart mitochondria.</title>
        <authorList>
            <person name="Chen R."/>
            <person name="Runswick M.J."/>
            <person name="Carroll J."/>
            <person name="Fearnley I.M."/>
            <person name="Walker J.E."/>
        </authorList>
    </citation>
    <scope>IDENTIFICATION IN THE ATP SYNTHASE COMPLEX</scope>
    <scope>SUBUNIT</scope>
    <scope>SUBCELLULAR LOCATION</scope>
</reference>
<reference key="9">
    <citation type="journal article" date="2013" name="Open Biol.">
        <title>The affinity purification and characterization of ATP synthase complexes from mitochondria.</title>
        <authorList>
            <person name="Runswick M.J."/>
            <person name="Bason J.V."/>
            <person name="Montgomery M.G."/>
            <person name="Robinson G.C."/>
            <person name="Fearnley I.M."/>
            <person name="Walker J.E."/>
        </authorList>
    </citation>
    <scope>FUNCTION</scope>
    <scope>IDENTIFICATION IN THE ATP SYNTHASE COMPLEX</scope>
    <scope>SUBCELLULAR LOCATION</scope>
    <scope>SUBUNIT</scope>
</reference>
<reference key="10">
    <citation type="journal article" date="2015" name="J. Biol. Chem.">
        <title>Organization of Subunits in the Membrane Domain of the Bovine F-ATPase Revealed by Covalent Cross-linking.</title>
        <authorList>
            <person name="Lee J."/>
            <person name="Ding S."/>
            <person name="Walpole T.B."/>
            <person name="Holding A.N."/>
            <person name="Montgomery M.G."/>
            <person name="Fearnley I.M."/>
            <person name="Walker J.E."/>
        </authorList>
    </citation>
    <scope>IDENTIFICATION BY MASS SPECTROMETRY</scope>
    <scope>IDENTIFICATION IN THE ATP SYNTHASE COMPLEX</scope>
</reference>
<reference evidence="16" key="11">
    <citation type="journal article" date="1994" name="Nature">
        <title>Structure at 2.8-A resolution of F1-ATPase from bovine heart mitochondria.</title>
        <authorList>
            <person name="Abrahams J.P."/>
            <person name="Leslie A.G.W."/>
            <person name="Lutter R."/>
            <person name="Walker J.E."/>
        </authorList>
    </citation>
    <scope>X-RAY CRYSTALLOGRAPHY (2.85 ANGSTROMS) OF 44-553 IN COMPLEX WITH ATP ANALOG</scope>
    <scope>SUBUNIT</scope>
</reference>
<reference evidence="21" key="12">
    <citation type="journal article" date="1996" name="Proc. Natl. Acad. Sci. U.S.A.">
        <title>The structure of bovine F1-ATPase complexed with the peptide antibiotic efrapeptin.</title>
        <authorList>
            <person name="Abrahams J.P."/>
            <person name="Buchanan S.K."/>
            <person name="van Raaij M.J."/>
            <person name="Fearnley I.M."/>
            <person name="Leslie A.G."/>
            <person name="Walker J.E."/>
        </authorList>
    </citation>
    <scope>X-RAY CRYSTALLOGRAPHY (3.10 ANGSTROMS) OF 44-553 IN COMPLEX WITH ATP ANALOG</scope>
    <scope>SUBUNIT</scope>
</reference>
<reference evidence="23" key="13">
    <citation type="journal article" date="1998" name="Structure">
        <title>Bovine F1-ATPase covalently inhibited with 4-chloro-7-nitrobenzofurazan: the structure provides further support for a rotary catalytic mechanism.</title>
        <authorList>
            <person name="Orriss G.L."/>
            <person name="Leslie A.G."/>
            <person name="Braig K."/>
            <person name="Walker J.E."/>
        </authorList>
    </citation>
    <scope>X-RAY CRYSTALLOGRAPHY (3.00 ANGSTROMS) OF 44-553 IN COMPLEX WITH ATP</scope>
    <scope>SUBUNIT</scope>
</reference>
<reference key="14">
    <citation type="journal article" date="2003" name="Nat. Struct. Biol.">
        <title>The structure of bovine F1-ATPase in complex with its regulatory protein IF1.</title>
        <authorList>
            <person name="Cabezon E."/>
            <person name="Montgomery M.G."/>
            <person name="Leslie A.G."/>
            <person name="Walker J.E."/>
        </authorList>
    </citation>
    <scope>X-RAY CRYSTALLOGRAPHY (2.8 ANGSTROMS) OF 44-553 IN COMPLEX WITH ATPIF1; ATP5F1B AND ATP5F1C</scope>
</reference>
<reference evidence="30" key="15">
    <citation type="journal article" date="2007" name="Proc. Natl. Acad. Sci. U.S.A.">
        <title>How the regulatory protein, IF(1), inhibits F(1)-ATPase from bovine mitochondria.</title>
        <authorList>
            <person name="Gledhill J.R."/>
            <person name="Montgomery M.G."/>
            <person name="Leslie A.G."/>
            <person name="Walker J.E."/>
        </authorList>
    </citation>
    <scope>X-RAY CRYSTALLOGRAPHY (2.10 ANGSTROMS) OF 45-553 IN COMPLEX WITH ATP; ATPIF1; ATP5F1B; ATP5F1C; ATP5F1D AND ATP5F1E</scope>
</reference>
<organism>
    <name type="scientific">Bos taurus</name>
    <name type="common">Bovine</name>
    <dbReference type="NCBI Taxonomy" id="9913"/>
    <lineage>
        <taxon>Eukaryota</taxon>
        <taxon>Metazoa</taxon>
        <taxon>Chordata</taxon>
        <taxon>Craniata</taxon>
        <taxon>Vertebrata</taxon>
        <taxon>Euteleostomi</taxon>
        <taxon>Mammalia</taxon>
        <taxon>Eutheria</taxon>
        <taxon>Laurasiatheria</taxon>
        <taxon>Artiodactyla</taxon>
        <taxon>Ruminantia</taxon>
        <taxon>Pecora</taxon>
        <taxon>Bovidae</taxon>
        <taxon>Bovinae</taxon>
        <taxon>Bos</taxon>
    </lineage>
</organism>
<protein>
    <recommendedName>
        <fullName evidence="3">ATP synthase F(1) complex subunit alpha, mitochondrial</fullName>
    </recommendedName>
    <alternativeName>
        <fullName evidence="3">ATP synthase F1 subunit alpha</fullName>
    </alternativeName>
</protein>
<dbReference type="EMBL" id="M22465">
    <property type="protein sequence ID" value="AAB59266.1"/>
    <property type="molecule type" value="mRNA"/>
</dbReference>
<dbReference type="EMBL" id="X64565">
    <property type="protein sequence ID" value="CAA45865.1"/>
    <property type="molecule type" value="Genomic_DNA"/>
</dbReference>
<dbReference type="EMBL" id="BC116059">
    <property type="protein sequence ID" value="AAI16060.1"/>
    <property type="molecule type" value="mRNA"/>
</dbReference>
<dbReference type="EMBL" id="M19680">
    <property type="protein sequence ID" value="AAA30399.1"/>
    <property type="molecule type" value="mRNA"/>
</dbReference>
<dbReference type="PIR" id="A27693">
    <property type="entry name" value="A27693"/>
</dbReference>
<dbReference type="PIR" id="S27201">
    <property type="entry name" value="PWBOA"/>
</dbReference>
<dbReference type="RefSeq" id="NP_777109.1">
    <property type="nucleotide sequence ID" value="NM_174684.2"/>
</dbReference>
<dbReference type="PDB" id="1BMF">
    <property type="method" value="X-ray"/>
    <property type="resolution" value="2.85 A"/>
    <property type="chains" value="A/B/C=44-553"/>
</dbReference>
<dbReference type="PDB" id="1COW">
    <property type="method" value="X-ray"/>
    <property type="resolution" value="3.10 A"/>
    <property type="chains" value="A/B/C=45-553"/>
</dbReference>
<dbReference type="PDB" id="1E1Q">
    <property type="method" value="X-ray"/>
    <property type="resolution" value="2.61 A"/>
    <property type="chains" value="A/B/C=44-553"/>
</dbReference>
<dbReference type="PDB" id="1E1R">
    <property type="method" value="X-ray"/>
    <property type="resolution" value="2.50 A"/>
    <property type="chains" value="A/B/C=44-553"/>
</dbReference>
<dbReference type="PDB" id="1E79">
    <property type="method" value="X-ray"/>
    <property type="resolution" value="2.40 A"/>
    <property type="chains" value="A/B/C=44-553"/>
</dbReference>
<dbReference type="PDB" id="1EFR">
    <property type="method" value="X-ray"/>
    <property type="resolution" value="3.10 A"/>
    <property type="chains" value="A/B/C=45-553"/>
</dbReference>
<dbReference type="PDB" id="1H8E">
    <property type="method" value="X-ray"/>
    <property type="resolution" value="2.00 A"/>
    <property type="chains" value="A/B/C=44-553"/>
</dbReference>
<dbReference type="PDB" id="1H8H">
    <property type="method" value="X-ray"/>
    <property type="resolution" value="2.90 A"/>
    <property type="chains" value="A/B/C=44-553"/>
</dbReference>
<dbReference type="PDB" id="1NBM">
    <property type="method" value="X-ray"/>
    <property type="resolution" value="3.00 A"/>
    <property type="chains" value="A/B/C=44-553"/>
</dbReference>
<dbReference type="PDB" id="1OHH">
    <property type="method" value="X-ray"/>
    <property type="resolution" value="2.80 A"/>
    <property type="chains" value="A/B/C=44-553"/>
</dbReference>
<dbReference type="PDB" id="1QO1">
    <property type="method" value="X-ray"/>
    <property type="resolution" value="3.90 A"/>
    <property type="chains" value="A/B/C=44-553"/>
</dbReference>
<dbReference type="PDB" id="1W0J">
    <property type="method" value="X-ray"/>
    <property type="resolution" value="2.20 A"/>
    <property type="chains" value="A/B/C=44-553"/>
</dbReference>
<dbReference type="PDB" id="1W0K">
    <property type="method" value="X-ray"/>
    <property type="resolution" value="2.85 A"/>
    <property type="chains" value="A/B/C=44-553"/>
</dbReference>
<dbReference type="PDB" id="2CK3">
    <property type="method" value="X-ray"/>
    <property type="resolution" value="1.90 A"/>
    <property type="chains" value="A/B/C=44-553"/>
</dbReference>
<dbReference type="PDB" id="2JDI">
    <property type="method" value="X-ray"/>
    <property type="resolution" value="1.90 A"/>
    <property type="chains" value="A/B/C=44-553"/>
</dbReference>
<dbReference type="PDB" id="2JIZ">
    <property type="method" value="X-ray"/>
    <property type="resolution" value="2.30 A"/>
    <property type="chains" value="A/B/C/H/I/J=44-553"/>
</dbReference>
<dbReference type="PDB" id="2JJ1">
    <property type="method" value="X-ray"/>
    <property type="resolution" value="2.70 A"/>
    <property type="chains" value="A/B/C/H/I/J=44-553"/>
</dbReference>
<dbReference type="PDB" id="2JJ2">
    <property type="method" value="X-ray"/>
    <property type="resolution" value="2.40 A"/>
    <property type="chains" value="A/B/C/H/I/J=44-553"/>
</dbReference>
<dbReference type="PDB" id="2JMX">
    <property type="method" value="NMR"/>
    <property type="chains" value="B=44-68"/>
</dbReference>
<dbReference type="PDB" id="2V7Q">
    <property type="method" value="X-ray"/>
    <property type="resolution" value="2.10 A"/>
    <property type="chains" value="A/B/C=45-553"/>
</dbReference>
<dbReference type="PDB" id="2W6E">
    <property type="method" value="X-ray"/>
    <property type="resolution" value="6.50 A"/>
    <property type="chains" value="A/B/C=1-553"/>
</dbReference>
<dbReference type="PDB" id="2W6F">
    <property type="method" value="X-ray"/>
    <property type="resolution" value="6.00 A"/>
    <property type="chains" value="A/B/C=1-553"/>
</dbReference>
<dbReference type="PDB" id="2W6G">
    <property type="method" value="X-ray"/>
    <property type="resolution" value="6.00 A"/>
    <property type="chains" value="A/B/C=1-553"/>
</dbReference>
<dbReference type="PDB" id="2W6H">
    <property type="method" value="X-ray"/>
    <property type="resolution" value="5.00 A"/>
    <property type="chains" value="A/B/C=1-553"/>
</dbReference>
<dbReference type="PDB" id="2W6I">
    <property type="method" value="X-ray"/>
    <property type="resolution" value="4.00 A"/>
    <property type="chains" value="A/B/C=1-553"/>
</dbReference>
<dbReference type="PDB" id="2W6J">
    <property type="method" value="X-ray"/>
    <property type="resolution" value="3.84 A"/>
    <property type="chains" value="A/B/C=1-553"/>
</dbReference>
<dbReference type="PDB" id="2WSS">
    <property type="method" value="X-ray"/>
    <property type="resolution" value="3.20 A"/>
    <property type="chains" value="A/B/C/J/K/L=44-553"/>
</dbReference>
<dbReference type="PDB" id="2XND">
    <property type="method" value="X-ray"/>
    <property type="resolution" value="3.50 A"/>
    <property type="chains" value="A/B/C=62-553"/>
</dbReference>
<dbReference type="PDB" id="4ASU">
    <property type="method" value="X-ray"/>
    <property type="resolution" value="2.60 A"/>
    <property type="chains" value="A/B/C=44-553"/>
</dbReference>
<dbReference type="PDB" id="4TSF">
    <property type="method" value="X-ray"/>
    <property type="resolution" value="3.20 A"/>
    <property type="chains" value="A/B/C=44-553"/>
</dbReference>
<dbReference type="PDB" id="4TT3">
    <property type="method" value="X-ray"/>
    <property type="resolution" value="3.21 A"/>
    <property type="chains" value="A/B/C=44-553"/>
</dbReference>
<dbReference type="PDB" id="4YXW">
    <property type="method" value="X-ray"/>
    <property type="resolution" value="3.10 A"/>
    <property type="chains" value="A/B/C=44-553"/>
</dbReference>
<dbReference type="PDB" id="4Z1M">
    <property type="method" value="X-ray"/>
    <property type="resolution" value="3.30 A"/>
    <property type="chains" value="A/B/C=44-553"/>
</dbReference>
<dbReference type="PDB" id="5ARA">
    <property type="method" value="EM"/>
    <property type="resolution" value="6.70 A"/>
    <property type="chains" value="A/B/C=44-553"/>
</dbReference>
<dbReference type="PDB" id="5ARE">
    <property type="method" value="EM"/>
    <property type="resolution" value="7.40 A"/>
    <property type="chains" value="A/B/C=44-553"/>
</dbReference>
<dbReference type="PDB" id="5ARH">
    <property type="method" value="EM"/>
    <property type="resolution" value="7.20 A"/>
    <property type="chains" value="A/B/C=44-553"/>
</dbReference>
<dbReference type="PDB" id="5ARI">
    <property type="method" value="EM"/>
    <property type="resolution" value="7.40 A"/>
    <property type="chains" value="A/B/C=44-553"/>
</dbReference>
<dbReference type="PDB" id="5FIJ">
    <property type="method" value="EM"/>
    <property type="resolution" value="7.40 A"/>
    <property type="chains" value="A/B/C=44-553"/>
</dbReference>
<dbReference type="PDB" id="5FIK">
    <property type="method" value="EM"/>
    <property type="resolution" value="6.40 A"/>
    <property type="chains" value="A/B/C=44-553"/>
</dbReference>
<dbReference type="PDB" id="5FIL">
    <property type="method" value="EM"/>
    <property type="resolution" value="7.10 A"/>
    <property type="chains" value="A/B/C=44-553"/>
</dbReference>
<dbReference type="PDB" id="6YY0">
    <property type="method" value="EM"/>
    <property type="resolution" value="3.23 A"/>
    <property type="chains" value="A/B/C=44-553"/>
</dbReference>
<dbReference type="PDB" id="6Z1R">
    <property type="method" value="EM"/>
    <property type="resolution" value="3.29 A"/>
    <property type="chains" value="A/B/C=44-553"/>
</dbReference>
<dbReference type="PDB" id="6Z1U">
    <property type="method" value="EM"/>
    <property type="resolution" value="3.47 A"/>
    <property type="chains" value="A/B/C=44-553"/>
</dbReference>
<dbReference type="PDB" id="6ZIQ">
    <property type="method" value="EM"/>
    <property type="resolution" value="4.33 A"/>
    <property type="chains" value="C=44-553"/>
</dbReference>
<dbReference type="PDB" id="6ZIT">
    <property type="method" value="EM"/>
    <property type="resolution" value="3.49 A"/>
    <property type="chains" value="C=44-553"/>
</dbReference>
<dbReference type="PDB" id="6ZIU">
    <property type="method" value="EM"/>
    <property type="resolution" value="6.02 A"/>
    <property type="chains" value="C=44-553"/>
</dbReference>
<dbReference type="PDB" id="6ZPO">
    <property type="method" value="EM"/>
    <property type="resolution" value="4.00 A"/>
    <property type="chains" value="A/B/C=44-553"/>
</dbReference>
<dbReference type="PDB" id="6ZQM">
    <property type="method" value="EM"/>
    <property type="resolution" value="3.29 A"/>
    <property type="chains" value="A/B/C=44-553"/>
</dbReference>
<dbReference type="PDB" id="6ZQN">
    <property type="method" value="EM"/>
    <property type="resolution" value="4.00 A"/>
    <property type="chains" value="A/B/C=44-553"/>
</dbReference>
<dbReference type="PDB" id="7AJB">
    <property type="method" value="EM"/>
    <property type="resolution" value="9.20 A"/>
    <property type="chains" value="A/AA/AB/AC/B/C=44-553"/>
</dbReference>
<dbReference type="PDB" id="7AJC">
    <property type="method" value="EM"/>
    <property type="resolution" value="11.90 A"/>
    <property type="chains" value="A/AA/AB/AC/B/C=44-553"/>
</dbReference>
<dbReference type="PDB" id="7AJD">
    <property type="method" value="EM"/>
    <property type="resolution" value="9.00 A"/>
    <property type="chains" value="A/AA/AB/AC/B/C=44-553"/>
</dbReference>
<dbReference type="PDB" id="7AJE">
    <property type="method" value="EM"/>
    <property type="resolution" value="9.40 A"/>
    <property type="chains" value="A/AA/AB/AC/B/C=44-553"/>
</dbReference>
<dbReference type="PDB" id="7AJF">
    <property type="method" value="EM"/>
    <property type="resolution" value="8.45 A"/>
    <property type="chains" value="A/AA/AB/AC/B/C=44-553"/>
</dbReference>
<dbReference type="PDB" id="7AJG">
    <property type="method" value="EM"/>
    <property type="resolution" value="10.70 A"/>
    <property type="chains" value="A/AA/AB/AC/B/C=44-553"/>
</dbReference>
<dbReference type="PDB" id="7AJH">
    <property type="method" value="EM"/>
    <property type="resolution" value="9.70 A"/>
    <property type="chains" value="A/AA/AB/AC/B/C=44-553"/>
</dbReference>
<dbReference type="PDB" id="7AJI">
    <property type="method" value="EM"/>
    <property type="resolution" value="11.40 A"/>
    <property type="chains" value="A/AA/AB/AC/B/C=44-553"/>
</dbReference>
<dbReference type="PDB" id="7AJJ">
    <property type="method" value="EM"/>
    <property type="resolution" value="13.10 A"/>
    <property type="chains" value="A/AA/AB/AC/B/C=44-553"/>
</dbReference>
<dbReference type="PDBsum" id="1BMF"/>
<dbReference type="PDBsum" id="1COW"/>
<dbReference type="PDBsum" id="1E1Q"/>
<dbReference type="PDBsum" id="1E1R"/>
<dbReference type="PDBsum" id="1E79"/>
<dbReference type="PDBsum" id="1EFR"/>
<dbReference type="PDBsum" id="1H8E"/>
<dbReference type="PDBsum" id="1H8H"/>
<dbReference type="PDBsum" id="1NBM"/>
<dbReference type="PDBsum" id="1OHH"/>
<dbReference type="PDBsum" id="1QO1"/>
<dbReference type="PDBsum" id="1W0J"/>
<dbReference type="PDBsum" id="1W0K"/>
<dbReference type="PDBsum" id="2CK3"/>
<dbReference type="PDBsum" id="2JDI"/>
<dbReference type="PDBsum" id="2JIZ"/>
<dbReference type="PDBsum" id="2JJ1"/>
<dbReference type="PDBsum" id="2JJ2"/>
<dbReference type="PDBsum" id="2JMX"/>
<dbReference type="PDBsum" id="2V7Q"/>
<dbReference type="PDBsum" id="2W6E"/>
<dbReference type="PDBsum" id="2W6F"/>
<dbReference type="PDBsum" id="2W6G"/>
<dbReference type="PDBsum" id="2W6H"/>
<dbReference type="PDBsum" id="2W6I"/>
<dbReference type="PDBsum" id="2W6J"/>
<dbReference type="PDBsum" id="2WSS"/>
<dbReference type="PDBsum" id="2XND"/>
<dbReference type="PDBsum" id="4ASU"/>
<dbReference type="PDBsum" id="4TSF"/>
<dbReference type="PDBsum" id="4TT3"/>
<dbReference type="PDBsum" id="4YXW"/>
<dbReference type="PDBsum" id="4Z1M"/>
<dbReference type="PDBsum" id="5ARA"/>
<dbReference type="PDBsum" id="5ARE"/>
<dbReference type="PDBsum" id="5ARH"/>
<dbReference type="PDBsum" id="5ARI"/>
<dbReference type="PDBsum" id="5FIJ"/>
<dbReference type="PDBsum" id="5FIK"/>
<dbReference type="PDBsum" id="5FIL"/>
<dbReference type="PDBsum" id="6YY0"/>
<dbReference type="PDBsum" id="6Z1R"/>
<dbReference type="PDBsum" id="6Z1U"/>
<dbReference type="PDBsum" id="6ZIQ"/>
<dbReference type="PDBsum" id="6ZIT"/>
<dbReference type="PDBsum" id="6ZIU"/>
<dbReference type="PDBsum" id="6ZPO"/>
<dbReference type="PDBsum" id="6ZQM"/>
<dbReference type="PDBsum" id="6ZQN"/>
<dbReference type="PDBsum" id="7AJB"/>
<dbReference type="PDBsum" id="7AJC"/>
<dbReference type="PDBsum" id="7AJD"/>
<dbReference type="PDBsum" id="7AJE"/>
<dbReference type="PDBsum" id="7AJF"/>
<dbReference type="PDBsum" id="7AJG"/>
<dbReference type="PDBsum" id="7AJH"/>
<dbReference type="PDBsum" id="7AJI"/>
<dbReference type="PDBsum" id="7AJJ"/>
<dbReference type="BMRB" id="P19483"/>
<dbReference type="EMDB" id="EMD-11001"/>
<dbReference type="EMDB" id="EMD-11039"/>
<dbReference type="EMDB" id="EMD-11040"/>
<dbReference type="EMDB" id="EMD-11228"/>
<dbReference type="EMDB" id="EMD-11229"/>
<dbReference type="EMDB" id="EMD-11230"/>
<dbReference type="EMDB" id="EMD-11342"/>
<dbReference type="EMDB" id="EMD-11368"/>
<dbReference type="EMDB" id="EMD-11369"/>
<dbReference type="EMDB" id="EMD-11428"/>
<dbReference type="EMDB" id="EMD-11429"/>
<dbReference type="EMDB" id="EMD-11430"/>
<dbReference type="SMR" id="P19483"/>
<dbReference type="CORUM" id="P19483"/>
<dbReference type="DIP" id="DIP-35479N"/>
<dbReference type="FunCoup" id="P19483">
    <property type="interactions" value="1498"/>
</dbReference>
<dbReference type="IntAct" id="P19483">
    <property type="interactions" value="9"/>
</dbReference>
<dbReference type="MINT" id="P19483"/>
<dbReference type="STRING" id="9913.ENSBTAP00000003259"/>
<dbReference type="GlyCosmos" id="P19483">
    <property type="glycosylation" value="1 site, No reported glycans"/>
</dbReference>
<dbReference type="GlyGen" id="P19483">
    <property type="glycosylation" value="2 sites, 1 O-linked glycan (1 site)"/>
</dbReference>
<dbReference type="PaxDb" id="9913-ENSBTAP00000003259"/>
<dbReference type="PeptideAtlas" id="P19483"/>
<dbReference type="GeneID" id="282578"/>
<dbReference type="KEGG" id="bta:282578"/>
<dbReference type="CTD" id="498"/>
<dbReference type="eggNOG" id="KOG1353">
    <property type="taxonomic scope" value="Eukaryota"/>
</dbReference>
<dbReference type="InParanoid" id="P19483"/>
<dbReference type="OrthoDB" id="9805536at2759"/>
<dbReference type="BRENDA" id="7.1.2.2">
    <property type="organism ID" value="908"/>
</dbReference>
<dbReference type="EvolutionaryTrace" id="P19483"/>
<dbReference type="Proteomes" id="UP000009136">
    <property type="component" value="Unplaced"/>
</dbReference>
<dbReference type="GO" id="GO:0005743">
    <property type="term" value="C:mitochondrial inner membrane"/>
    <property type="evidence" value="ECO:0007669"/>
    <property type="project" value="UniProtKB-SubCell"/>
</dbReference>
<dbReference type="GO" id="GO:0005739">
    <property type="term" value="C:mitochondrion"/>
    <property type="evidence" value="ECO:0000305"/>
    <property type="project" value="UniProtKB"/>
</dbReference>
<dbReference type="GO" id="GO:0005886">
    <property type="term" value="C:plasma membrane"/>
    <property type="evidence" value="ECO:0007669"/>
    <property type="project" value="UniProtKB-SubCell"/>
</dbReference>
<dbReference type="GO" id="GO:0045259">
    <property type="term" value="C:proton-transporting ATP synthase complex"/>
    <property type="evidence" value="ECO:0000314"/>
    <property type="project" value="UniProtKB"/>
</dbReference>
<dbReference type="GO" id="GO:0043531">
    <property type="term" value="F:ADP binding"/>
    <property type="evidence" value="ECO:0000318"/>
    <property type="project" value="GO_Central"/>
</dbReference>
<dbReference type="GO" id="GO:0005524">
    <property type="term" value="F:ATP binding"/>
    <property type="evidence" value="ECO:0000318"/>
    <property type="project" value="GO_Central"/>
</dbReference>
<dbReference type="GO" id="GO:0046933">
    <property type="term" value="F:proton-transporting ATP synthase activity, rotational mechanism"/>
    <property type="evidence" value="ECO:0007669"/>
    <property type="project" value="InterPro"/>
</dbReference>
<dbReference type="GO" id="GO:0015986">
    <property type="term" value="P:proton motive force-driven ATP synthesis"/>
    <property type="evidence" value="ECO:0000250"/>
    <property type="project" value="UniProtKB"/>
</dbReference>
<dbReference type="CDD" id="cd18113">
    <property type="entry name" value="ATP-synt_F1_alpha_C"/>
    <property type="match status" value="1"/>
</dbReference>
<dbReference type="CDD" id="cd18116">
    <property type="entry name" value="ATP-synt_F1_alpha_N"/>
    <property type="match status" value="1"/>
</dbReference>
<dbReference type="CDD" id="cd01132">
    <property type="entry name" value="F1-ATPase_alpha_CD"/>
    <property type="match status" value="1"/>
</dbReference>
<dbReference type="FunFam" id="1.20.150.20:FF:000001">
    <property type="entry name" value="ATP synthase subunit alpha"/>
    <property type="match status" value="1"/>
</dbReference>
<dbReference type="FunFam" id="2.40.30.20:FF:000001">
    <property type="entry name" value="ATP synthase subunit alpha"/>
    <property type="match status" value="1"/>
</dbReference>
<dbReference type="FunFam" id="3.40.50.300:FF:002432">
    <property type="entry name" value="ATP synthase subunit alpha, mitochondrial"/>
    <property type="match status" value="1"/>
</dbReference>
<dbReference type="Gene3D" id="2.40.30.20">
    <property type="match status" value="1"/>
</dbReference>
<dbReference type="Gene3D" id="1.20.150.20">
    <property type="entry name" value="ATP synthase alpha/beta chain, C-terminal domain"/>
    <property type="match status" value="1"/>
</dbReference>
<dbReference type="Gene3D" id="3.40.50.300">
    <property type="entry name" value="P-loop containing nucleotide triphosphate hydrolases"/>
    <property type="match status" value="1"/>
</dbReference>
<dbReference type="HAMAP" id="MF_01346">
    <property type="entry name" value="ATP_synth_alpha_bact"/>
    <property type="match status" value="1"/>
</dbReference>
<dbReference type="InterPro" id="IPR023366">
    <property type="entry name" value="ATP_synth_asu-like_sf"/>
</dbReference>
<dbReference type="InterPro" id="IPR000793">
    <property type="entry name" value="ATP_synth_asu_C"/>
</dbReference>
<dbReference type="InterPro" id="IPR038376">
    <property type="entry name" value="ATP_synth_asu_C_sf"/>
</dbReference>
<dbReference type="InterPro" id="IPR033732">
    <property type="entry name" value="ATP_synth_F1_a_nt-bd_dom"/>
</dbReference>
<dbReference type="InterPro" id="IPR005294">
    <property type="entry name" value="ATP_synth_F1_asu"/>
</dbReference>
<dbReference type="InterPro" id="IPR020003">
    <property type="entry name" value="ATPase_a/bsu_AS"/>
</dbReference>
<dbReference type="InterPro" id="IPR004100">
    <property type="entry name" value="ATPase_F1/V1/A1_a/bsu_N"/>
</dbReference>
<dbReference type="InterPro" id="IPR036121">
    <property type="entry name" value="ATPase_F1/V1/A1_a/bsu_N_sf"/>
</dbReference>
<dbReference type="InterPro" id="IPR000194">
    <property type="entry name" value="ATPase_F1/V1/A1_a/bsu_nucl-bd"/>
</dbReference>
<dbReference type="InterPro" id="IPR027417">
    <property type="entry name" value="P-loop_NTPase"/>
</dbReference>
<dbReference type="NCBIfam" id="TIGR00962">
    <property type="entry name" value="atpA"/>
    <property type="match status" value="1"/>
</dbReference>
<dbReference type="NCBIfam" id="NF009884">
    <property type="entry name" value="PRK13343.1"/>
    <property type="match status" value="1"/>
</dbReference>
<dbReference type="PANTHER" id="PTHR48082">
    <property type="entry name" value="ATP SYNTHASE SUBUNIT ALPHA, MITOCHONDRIAL"/>
    <property type="match status" value="1"/>
</dbReference>
<dbReference type="PANTHER" id="PTHR48082:SF2">
    <property type="entry name" value="ATP SYNTHASE SUBUNIT ALPHA, MITOCHONDRIAL"/>
    <property type="match status" value="1"/>
</dbReference>
<dbReference type="Pfam" id="PF00006">
    <property type="entry name" value="ATP-synt_ab"/>
    <property type="match status" value="1"/>
</dbReference>
<dbReference type="Pfam" id="PF00306">
    <property type="entry name" value="ATP-synt_ab_C"/>
    <property type="match status" value="1"/>
</dbReference>
<dbReference type="Pfam" id="PF02874">
    <property type="entry name" value="ATP-synt_ab_N"/>
    <property type="match status" value="1"/>
</dbReference>
<dbReference type="PIRSF" id="PIRSF039088">
    <property type="entry name" value="F_ATPase_subunit_alpha"/>
    <property type="match status" value="1"/>
</dbReference>
<dbReference type="SUPFAM" id="SSF47917">
    <property type="entry name" value="C-terminal domain of alpha and beta subunits of F1 ATP synthase"/>
    <property type="match status" value="1"/>
</dbReference>
<dbReference type="SUPFAM" id="SSF50615">
    <property type="entry name" value="N-terminal domain of alpha and beta subunits of F1 ATP synthase"/>
    <property type="match status" value="1"/>
</dbReference>
<dbReference type="SUPFAM" id="SSF52540">
    <property type="entry name" value="P-loop containing nucleoside triphosphate hydrolases"/>
    <property type="match status" value="1"/>
</dbReference>
<dbReference type="PROSITE" id="PS00152">
    <property type="entry name" value="ATPASE_ALPHA_BETA"/>
    <property type="match status" value="1"/>
</dbReference>
<keyword id="KW-0002">3D-structure</keyword>
<keyword id="KW-0007">Acetylation</keyword>
<keyword id="KW-0066">ATP synthesis</keyword>
<keyword id="KW-0067">ATP-binding</keyword>
<keyword id="KW-1003">Cell membrane</keyword>
<keyword id="KW-0139">CF(1)</keyword>
<keyword id="KW-0903">Direct protein sequencing</keyword>
<keyword id="KW-0325">Glycoprotein</keyword>
<keyword id="KW-0375">Hydrogen ion transport</keyword>
<keyword id="KW-0406">Ion transport</keyword>
<keyword id="KW-0460">Magnesium</keyword>
<keyword id="KW-0472">Membrane</keyword>
<keyword id="KW-0479">Metal-binding</keyword>
<keyword id="KW-0488">Methylation</keyword>
<keyword id="KW-0496">Mitochondrion</keyword>
<keyword id="KW-0999">Mitochondrion inner membrane</keyword>
<keyword id="KW-0547">Nucleotide-binding</keyword>
<keyword id="KW-0597">Phosphoprotein</keyword>
<keyword id="KW-0873">Pyrrolidone carboxylic acid</keyword>
<keyword id="KW-1185">Reference proteome</keyword>
<keyword id="KW-0809">Transit peptide</keyword>
<keyword id="KW-0813">Transport</keyword>
<accession>P19483</accession>
<accession>P05629</accession>
<accession>P19482</accession>
<accession>Q1JQC4</accession>